<accession>C1KIZ5</accession>
<name>SCR6B_ORBFA</name>
<sequence>MDTKVACLLLIILGALTVQGAVSGNKRINPLHARQWGEQCMNSMEEFCVPEYSECPPEYEPCREDKYCENDYYCCCRYSGY</sequence>
<dbReference type="EMBL" id="FJ842108">
    <property type="protein sequence ID" value="ACO24836.1"/>
    <property type="molecule type" value="mRNA"/>
</dbReference>
<dbReference type="RefSeq" id="XP_020631985.1">
    <property type="nucleotide sequence ID" value="XM_020776326.1"/>
</dbReference>
<dbReference type="RefSeq" id="XP_020631986.1">
    <property type="nucleotide sequence ID" value="XM_020776327.1"/>
</dbReference>
<dbReference type="RefSeq" id="XP_020631987.1">
    <property type="nucleotide sequence ID" value="XM_020776328.1"/>
</dbReference>
<dbReference type="SMR" id="C1KIZ5"/>
<dbReference type="EnsemblMetazoa" id="XM_020776326.1">
    <property type="protein sequence ID" value="XP_020631985.1"/>
    <property type="gene ID" value="LOC110068907"/>
</dbReference>
<dbReference type="EnsemblMetazoa" id="XM_020776327.1">
    <property type="protein sequence ID" value="XP_020631986.1"/>
    <property type="gene ID" value="LOC110068907"/>
</dbReference>
<dbReference type="EnsemblMetazoa" id="XM_020776328.1">
    <property type="protein sequence ID" value="XP_020631987.1"/>
    <property type="gene ID" value="LOC110068908"/>
</dbReference>
<dbReference type="GeneID" id="110068907"/>
<dbReference type="GeneID" id="110068908"/>
<dbReference type="GO" id="GO:0005576">
    <property type="term" value="C:extracellular region"/>
    <property type="evidence" value="ECO:0007669"/>
    <property type="project" value="UniProtKB-SubCell"/>
</dbReference>
<dbReference type="GO" id="GO:0042151">
    <property type="term" value="C:nematocyst"/>
    <property type="evidence" value="ECO:0007669"/>
    <property type="project" value="UniProtKB-SubCell"/>
</dbReference>
<dbReference type="GO" id="GO:0090729">
    <property type="term" value="F:toxin activity"/>
    <property type="evidence" value="ECO:0007669"/>
    <property type="project" value="UniProtKB-KW"/>
</dbReference>
<protein>
    <recommendedName>
        <fullName evidence="4">Small cysteine-rich protein 6</fullName>
        <shortName evidence="4">Mfav-SCRiP6</shortName>
        <shortName evidence="4">SCRiP6</shortName>
    </recommendedName>
</protein>
<comment type="function">
    <text evidence="1 2 6">Induces neurotoxic symptoms on zebrafish (By similarity). Has also been claimed to be implied in calcification, but tests on homolog proteins suggest that proteins of this family have a neurotoxic function and not a calcification function (PubMed:19283069).</text>
</comment>
<comment type="subcellular location">
    <subcellularLocation>
        <location>Secreted</location>
    </subcellularLocation>
    <subcellularLocation>
        <location evidence="5">Nematocyst</location>
    </subcellularLocation>
</comment>
<comment type="PTM">
    <text evidence="5">Contains 4 disulfide bonds.</text>
</comment>
<comment type="similarity">
    <text evidence="7">Belongs to the Cnidaria small cysteine-rich protein (SCRiP) family. beta subfamily.</text>
</comment>
<keyword id="KW-0165">Cleavage on pair of basic residues</keyword>
<keyword id="KW-1015">Disulfide bond</keyword>
<keyword id="KW-0166">Nematocyst</keyword>
<keyword id="KW-0528">Neurotoxin</keyword>
<keyword id="KW-0964">Secreted</keyword>
<keyword id="KW-0732">Signal</keyword>
<keyword id="KW-0800">Toxin</keyword>
<organism>
    <name type="scientific">Orbicella faveolata</name>
    <name type="common">Mountainous star coral</name>
    <name type="synonym">Montastraea faveolata</name>
    <dbReference type="NCBI Taxonomy" id="48498"/>
    <lineage>
        <taxon>Eukaryota</taxon>
        <taxon>Metazoa</taxon>
        <taxon>Cnidaria</taxon>
        <taxon>Anthozoa</taxon>
        <taxon>Hexacorallia</taxon>
        <taxon>Scleractinia</taxon>
        <taxon>Faviina</taxon>
        <taxon>Merulinidae</taxon>
        <taxon>Orbicella</taxon>
    </lineage>
</organism>
<evidence type="ECO:0000250" key="1">
    <source>
        <dbReference type="UniProtKB" id="C0H691"/>
    </source>
</evidence>
<evidence type="ECO:0000250" key="2">
    <source>
        <dbReference type="UniProtKB" id="C0H692"/>
    </source>
</evidence>
<evidence type="ECO:0000255" key="3"/>
<evidence type="ECO:0000303" key="4">
    <source>
    </source>
</evidence>
<evidence type="ECO:0000305" key="5"/>
<evidence type="ECO:0000305" key="6">
    <source>
    </source>
</evidence>
<evidence type="ECO:0000305" key="7">
    <source>
    </source>
</evidence>
<feature type="signal peptide" evidence="3">
    <location>
        <begin position="1"/>
        <end position="23"/>
    </location>
</feature>
<feature type="propeptide" id="PRO_0000434287" evidence="5">
    <location>
        <begin position="24"/>
        <end position="25"/>
    </location>
</feature>
<feature type="chain" id="PRO_0000434288" description="Small cysteine-rich protein 6">
    <location>
        <begin position="28"/>
        <end position="81"/>
    </location>
</feature>
<reference key="1">
    <citation type="journal article" date="2009" name="PLoS ONE">
        <title>Identification and gene expression analysis of a taxonomically restricted cysteine-rich protein family in reef-building corals.</title>
        <authorList>
            <person name="Sunagawa S."/>
            <person name="DeSalvo M.K."/>
            <person name="Voolstra C.R."/>
            <person name="Reyes-Bermudez A."/>
            <person name="Medina M."/>
        </authorList>
    </citation>
    <scope>NUCLEOTIDE SEQUENCE [MRNA]</scope>
</reference>
<reference key="2">
    <citation type="journal article" date="2024" name="Toxins">
        <title>Evolutionary analysis of cnidaria small cysteine-rich proteins (scrips), an enigmatic neurotoxin family from stony corals and sea anemones (Anthozoa: Hexacorallia).</title>
        <authorList>
            <person name="Barroso R.A."/>
            <person name="Ramos L."/>
            <person name="Moreno H."/>
            <person name="Antunes A."/>
        </authorList>
    </citation>
    <scope>NOMENCLATURE</scope>
</reference>
<proteinExistence type="inferred from homology"/>